<accession>P20384</accession>
<feature type="chain" id="PRO_0000196382" description="Putative transposon Tn552 DNA-invertase bin3">
    <location>
        <begin position="1"/>
        <end position="202"/>
    </location>
</feature>
<feature type="domain" description="Resolvase/invertase-type recombinase catalytic" evidence="1">
    <location>
        <begin position="1"/>
        <end position="143"/>
    </location>
</feature>
<feature type="active site" description="O-(5'-phospho-DNA)-serine intermediate" evidence="1">
    <location>
        <position position="9"/>
    </location>
</feature>
<feature type="strand" evidence="4">
    <location>
        <begin position="2"/>
        <end position="10"/>
    </location>
</feature>
<feature type="helix" evidence="4">
    <location>
        <begin position="15"/>
        <end position="24"/>
    </location>
</feature>
<feature type="strand" evidence="4">
    <location>
        <begin position="28"/>
        <end position="35"/>
    </location>
</feature>
<feature type="strand" evidence="5">
    <location>
        <begin position="40"/>
        <end position="42"/>
    </location>
</feature>
<feature type="helix" evidence="4">
    <location>
        <begin position="44"/>
        <end position="52"/>
    </location>
</feature>
<feature type="strand" evidence="4">
    <location>
        <begin position="58"/>
        <end position="63"/>
    </location>
</feature>
<feature type="helix" evidence="4">
    <location>
        <begin position="64"/>
        <end position="67"/>
    </location>
</feature>
<feature type="helix" evidence="4">
    <location>
        <begin position="71"/>
        <end position="83"/>
    </location>
</feature>
<feature type="strand" evidence="4">
    <location>
        <begin position="87"/>
        <end position="90"/>
    </location>
</feature>
<feature type="helix" evidence="4">
    <location>
        <begin position="94"/>
        <end position="97"/>
    </location>
</feature>
<feature type="strand" evidence="6">
    <location>
        <begin position="99"/>
        <end position="101"/>
    </location>
</feature>
<feature type="helix" evidence="4">
    <location>
        <begin position="103"/>
        <end position="123"/>
    </location>
</feature>
<feature type="helix" evidence="3">
    <location>
        <begin position="127"/>
        <end position="142"/>
    </location>
</feature>
<feature type="strand" evidence="3">
    <location>
        <begin position="151"/>
        <end position="153"/>
    </location>
</feature>
<feature type="helix" evidence="3">
    <location>
        <begin position="159"/>
        <end position="173"/>
    </location>
</feature>
<feature type="helix" evidence="3">
    <location>
        <begin position="178"/>
        <end position="185"/>
    </location>
</feature>
<feature type="helix" evidence="3">
    <location>
        <begin position="189"/>
        <end position="196"/>
    </location>
</feature>
<keyword id="KW-0002">3D-structure</keyword>
<keyword id="KW-0229">DNA integration</keyword>
<keyword id="KW-0230">DNA invertase</keyword>
<keyword id="KW-0233">DNA recombination</keyword>
<keyword id="KW-0238">DNA-binding</keyword>
<keyword id="KW-0614">Plasmid</keyword>
<keyword id="KW-0814">Transposable element</keyword>
<keyword id="KW-0815">Transposition</keyword>
<organism>
    <name type="scientific">Staphylococcus aureus</name>
    <dbReference type="NCBI Taxonomy" id="1280"/>
    <lineage>
        <taxon>Bacteria</taxon>
        <taxon>Bacillati</taxon>
        <taxon>Bacillota</taxon>
        <taxon>Bacilli</taxon>
        <taxon>Bacillales</taxon>
        <taxon>Staphylococcaceae</taxon>
        <taxon>Staphylococcus</taxon>
    </lineage>
</organism>
<geneLocation type="plasmid">
    <name>pI9789</name>
</geneLocation>
<sequence>MIIGYARVSSLDQNLERQLENLKTFGAEKIFTEKQSGKSIENRPILQKALNFVRMGDRFIVESIDRLGRNYNEVIHTVNYLKDKEVQLMITSLPMMNEVIGNPLLDKFMKDLIIQILAMVSEQERNESKRRQAQGIQVAKEKGVYKGRPLLYSPNAKDPQKRVIYHRVVEMLEEGQAISKIAKEVNITRQTVYRIKHDNGLS</sequence>
<evidence type="ECO:0000255" key="1">
    <source>
        <dbReference type="PROSITE-ProRule" id="PRU01072"/>
    </source>
</evidence>
<evidence type="ECO:0000305" key="2"/>
<evidence type="ECO:0007829" key="3">
    <source>
        <dbReference type="PDB" id="2R0Q"/>
    </source>
</evidence>
<evidence type="ECO:0007829" key="4">
    <source>
        <dbReference type="PDB" id="3PKZ"/>
    </source>
</evidence>
<evidence type="ECO:0007829" key="5">
    <source>
        <dbReference type="PDB" id="5C31"/>
    </source>
</evidence>
<evidence type="ECO:0007829" key="6">
    <source>
        <dbReference type="PDB" id="5C34"/>
    </source>
</evidence>
<name>BIN3_STAAU</name>
<gene>
    <name type="primary">bin3</name>
</gene>
<dbReference type="EMBL" id="X16298">
    <property type="protein sequence ID" value="CAA34366.1"/>
    <property type="molecule type" value="Genomic_DNA"/>
</dbReference>
<dbReference type="PIR" id="S09385">
    <property type="entry name" value="S09385"/>
</dbReference>
<dbReference type="RefSeq" id="WP_000583535.1">
    <property type="nucleotide sequence ID" value="NZ_UHCF01000003.1"/>
</dbReference>
<dbReference type="RefSeq" id="YP_006937606.1">
    <property type="nucleotide sequence ID" value="NC_013319.1"/>
</dbReference>
<dbReference type="RefSeq" id="YP_006938640.1">
    <property type="nucleotide sequence ID" value="NC_013347.1"/>
</dbReference>
<dbReference type="RefSeq" id="YP_006938774.1">
    <property type="nucleotide sequence ID" value="NC_013352.1"/>
</dbReference>
<dbReference type="PDB" id="2R0Q">
    <property type="method" value="X-ray"/>
    <property type="resolution" value="3.20 A"/>
    <property type="chains" value="C/D/E/F=1-202"/>
</dbReference>
<dbReference type="PDB" id="3PKZ">
    <property type="method" value="X-ray"/>
    <property type="resolution" value="1.80 A"/>
    <property type="chains" value="A/B/C/D/E/F/G/H/I/J/K/L=1-124"/>
</dbReference>
<dbReference type="PDB" id="5C31">
    <property type="method" value="X-ray"/>
    <property type="resolution" value="3.10 A"/>
    <property type="chains" value="A/B/C/D/E/F/G/H/I/J/K/L=1-128"/>
</dbReference>
<dbReference type="PDB" id="5C32">
    <property type="method" value="X-ray"/>
    <property type="resolution" value="3.05 A"/>
    <property type="chains" value="A/B/C/D=1-128"/>
</dbReference>
<dbReference type="PDB" id="5C34">
    <property type="method" value="X-ray"/>
    <property type="resolution" value="2.65 A"/>
    <property type="chains" value="B/C=1-128"/>
</dbReference>
<dbReference type="PDB" id="5C35">
    <property type="method" value="X-ray"/>
    <property type="resolution" value="2.40 A"/>
    <property type="chains" value="A/B=1-128"/>
</dbReference>
<dbReference type="PDBsum" id="2R0Q"/>
<dbReference type="PDBsum" id="3PKZ"/>
<dbReference type="PDBsum" id="5C31"/>
<dbReference type="PDBsum" id="5C32"/>
<dbReference type="PDBsum" id="5C34"/>
<dbReference type="PDBsum" id="5C35"/>
<dbReference type="SMR" id="P20384"/>
<dbReference type="DIP" id="DIP-59136N"/>
<dbReference type="EvolutionaryTrace" id="P20384"/>
<dbReference type="GO" id="GO:0003677">
    <property type="term" value="F:DNA binding"/>
    <property type="evidence" value="ECO:0007669"/>
    <property type="project" value="UniProtKB-KW"/>
</dbReference>
<dbReference type="GO" id="GO:0000150">
    <property type="term" value="F:DNA strand exchange activity"/>
    <property type="evidence" value="ECO:0007669"/>
    <property type="project" value="UniProtKB-KW"/>
</dbReference>
<dbReference type="GO" id="GO:0015074">
    <property type="term" value="P:DNA integration"/>
    <property type="evidence" value="ECO:0007669"/>
    <property type="project" value="UniProtKB-KW"/>
</dbReference>
<dbReference type="GO" id="GO:0032196">
    <property type="term" value="P:transposition"/>
    <property type="evidence" value="ECO:0007669"/>
    <property type="project" value="UniProtKB-KW"/>
</dbReference>
<dbReference type="CDD" id="cd03768">
    <property type="entry name" value="SR_ResInv"/>
    <property type="match status" value="1"/>
</dbReference>
<dbReference type="Gene3D" id="1.10.10.60">
    <property type="entry name" value="Homeodomain-like"/>
    <property type="match status" value="1"/>
</dbReference>
<dbReference type="Gene3D" id="3.40.50.1390">
    <property type="entry name" value="Resolvase, N-terminal catalytic domain"/>
    <property type="match status" value="1"/>
</dbReference>
<dbReference type="InterPro" id="IPR006118">
    <property type="entry name" value="Recombinase_CS"/>
</dbReference>
<dbReference type="InterPro" id="IPR006119">
    <property type="entry name" value="Resolv_N"/>
</dbReference>
<dbReference type="InterPro" id="IPR036162">
    <property type="entry name" value="Resolvase-like_N_sf"/>
</dbReference>
<dbReference type="InterPro" id="IPR006120">
    <property type="entry name" value="Resolvase_HTH_dom"/>
</dbReference>
<dbReference type="InterPro" id="IPR050639">
    <property type="entry name" value="SSR_resolvase"/>
</dbReference>
<dbReference type="PANTHER" id="PTHR30461">
    <property type="entry name" value="DNA-INVERTASE FROM LAMBDOID PROPHAGE"/>
    <property type="match status" value="1"/>
</dbReference>
<dbReference type="PANTHER" id="PTHR30461:SF26">
    <property type="entry name" value="RESOLVASE HOMOLOG YNEB"/>
    <property type="match status" value="1"/>
</dbReference>
<dbReference type="Pfam" id="PF02796">
    <property type="entry name" value="HTH_7"/>
    <property type="match status" value="1"/>
</dbReference>
<dbReference type="Pfam" id="PF00239">
    <property type="entry name" value="Resolvase"/>
    <property type="match status" value="1"/>
</dbReference>
<dbReference type="SMART" id="SM00857">
    <property type="entry name" value="Resolvase"/>
    <property type="match status" value="1"/>
</dbReference>
<dbReference type="SUPFAM" id="SSF53041">
    <property type="entry name" value="Resolvase-like"/>
    <property type="match status" value="1"/>
</dbReference>
<dbReference type="PROSITE" id="PS00397">
    <property type="entry name" value="RECOMBINASES_1"/>
    <property type="match status" value="1"/>
</dbReference>
<dbReference type="PROSITE" id="PS00398">
    <property type="entry name" value="RECOMBINASES_2"/>
    <property type="match status" value="1"/>
</dbReference>
<dbReference type="PROSITE" id="PS51736">
    <property type="entry name" value="RECOMBINASES_3"/>
    <property type="match status" value="1"/>
</dbReference>
<comment type="function">
    <text>Potential DNA invertase.</text>
</comment>
<comment type="similarity">
    <text evidence="2">Belongs to the site-specific recombinase resolvase family.</text>
</comment>
<protein>
    <recommendedName>
        <fullName>Putative transposon Tn552 DNA-invertase bin3</fullName>
    </recommendedName>
</protein>
<reference key="1">
    <citation type="journal article" date="1989" name="EMBO J.">
        <title>Characterization of the staphylococcal beta-lactamase transposon Tn552.</title>
        <authorList>
            <person name="Rowland S.J."/>
            <person name="Dyke K.G.H."/>
        </authorList>
    </citation>
    <scope>NUCLEOTIDE SEQUENCE [GENOMIC DNA]</scope>
    <source>
        <strain>NCTC 9789 / PS80</strain>
    </source>
</reference>
<reference key="2">
    <citation type="submission" date="1993-09" db="EMBL/GenBank/DDBJ databases">
        <authorList>
            <person name="Rowland S.J."/>
        </authorList>
    </citation>
    <scope>SEQUENCE REVISION TO C-TERMINUS</scope>
</reference>
<proteinExistence type="evidence at protein level"/>